<protein>
    <recommendedName>
        <fullName evidence="1">Large ribosomal subunit protein uL23</fullName>
    </recommendedName>
    <alternativeName>
        <fullName evidence="2">50S ribosomal protein L23</fullName>
    </alternativeName>
</protein>
<evidence type="ECO:0000255" key="1">
    <source>
        <dbReference type="HAMAP-Rule" id="MF_01369"/>
    </source>
</evidence>
<evidence type="ECO:0000305" key="2"/>
<comment type="function">
    <text evidence="1">One of the early assembly proteins it binds 23S rRNA. One of the proteins that surrounds the polypeptide exit tunnel on the outside of the ribosome. Forms the main docking site for trigger factor binding to the ribosome.</text>
</comment>
<comment type="subunit">
    <text evidence="1">Part of the 50S ribosomal subunit. Contacts protein L29, and trigger factor when it is bound to the ribosome.</text>
</comment>
<comment type="similarity">
    <text evidence="1">Belongs to the universal ribosomal protein uL23 family.</text>
</comment>
<accession>Q0AIJ3</accession>
<keyword id="KW-0687">Ribonucleoprotein</keyword>
<keyword id="KW-0689">Ribosomal protein</keyword>
<keyword id="KW-0694">RNA-binding</keyword>
<keyword id="KW-0699">rRNA-binding</keyword>
<sequence length="111" mass="12931">MKIINIGSERALEVIKAPQISEKATFLAEKVRQIIFYVSRDANKAEIKSAIEQIWKSQNIKVKSVQIINVKGKKKRFGRYIGQKSDWKKAFVSLKDDREIDFTDVRLFEDK</sequence>
<dbReference type="EMBL" id="CP000450">
    <property type="protein sequence ID" value="ABI58833.1"/>
    <property type="molecule type" value="Genomic_DNA"/>
</dbReference>
<dbReference type="RefSeq" id="WP_011633675.1">
    <property type="nucleotide sequence ID" value="NC_008344.1"/>
</dbReference>
<dbReference type="SMR" id="Q0AIJ3"/>
<dbReference type="STRING" id="335283.Neut_0560"/>
<dbReference type="KEGG" id="net:Neut_0560"/>
<dbReference type="eggNOG" id="COG0089">
    <property type="taxonomic scope" value="Bacteria"/>
</dbReference>
<dbReference type="HOGENOM" id="CLU_037562_3_1_4"/>
<dbReference type="OrthoDB" id="9793353at2"/>
<dbReference type="Proteomes" id="UP000001966">
    <property type="component" value="Chromosome"/>
</dbReference>
<dbReference type="GO" id="GO:1990904">
    <property type="term" value="C:ribonucleoprotein complex"/>
    <property type="evidence" value="ECO:0007669"/>
    <property type="project" value="UniProtKB-KW"/>
</dbReference>
<dbReference type="GO" id="GO:0005840">
    <property type="term" value="C:ribosome"/>
    <property type="evidence" value="ECO:0007669"/>
    <property type="project" value="UniProtKB-KW"/>
</dbReference>
<dbReference type="GO" id="GO:0019843">
    <property type="term" value="F:rRNA binding"/>
    <property type="evidence" value="ECO:0007669"/>
    <property type="project" value="UniProtKB-UniRule"/>
</dbReference>
<dbReference type="GO" id="GO:0003735">
    <property type="term" value="F:structural constituent of ribosome"/>
    <property type="evidence" value="ECO:0007669"/>
    <property type="project" value="InterPro"/>
</dbReference>
<dbReference type="GO" id="GO:0006412">
    <property type="term" value="P:translation"/>
    <property type="evidence" value="ECO:0007669"/>
    <property type="project" value="UniProtKB-UniRule"/>
</dbReference>
<dbReference type="FunFam" id="3.30.70.330:FF:000001">
    <property type="entry name" value="50S ribosomal protein L23"/>
    <property type="match status" value="1"/>
</dbReference>
<dbReference type="Gene3D" id="3.30.70.330">
    <property type="match status" value="1"/>
</dbReference>
<dbReference type="HAMAP" id="MF_01369_B">
    <property type="entry name" value="Ribosomal_uL23_B"/>
    <property type="match status" value="1"/>
</dbReference>
<dbReference type="InterPro" id="IPR012677">
    <property type="entry name" value="Nucleotide-bd_a/b_plait_sf"/>
</dbReference>
<dbReference type="InterPro" id="IPR013025">
    <property type="entry name" value="Ribosomal_uL23-like"/>
</dbReference>
<dbReference type="InterPro" id="IPR012678">
    <property type="entry name" value="Ribosomal_uL23/eL15/eS24_sf"/>
</dbReference>
<dbReference type="NCBIfam" id="NF004359">
    <property type="entry name" value="PRK05738.1-3"/>
    <property type="match status" value="1"/>
</dbReference>
<dbReference type="NCBIfam" id="NF004363">
    <property type="entry name" value="PRK05738.2-4"/>
    <property type="match status" value="1"/>
</dbReference>
<dbReference type="Pfam" id="PF00276">
    <property type="entry name" value="Ribosomal_L23"/>
    <property type="match status" value="1"/>
</dbReference>
<dbReference type="SUPFAM" id="SSF54189">
    <property type="entry name" value="Ribosomal proteins S24e, L23 and L15e"/>
    <property type="match status" value="1"/>
</dbReference>
<name>RL23_NITEC</name>
<gene>
    <name evidence="1" type="primary">rplW</name>
    <name type="ordered locus">Neut_0560</name>
</gene>
<feature type="chain" id="PRO_1000068121" description="Large ribosomal subunit protein uL23">
    <location>
        <begin position="1"/>
        <end position="111"/>
    </location>
</feature>
<organism>
    <name type="scientific">Nitrosomonas eutropha (strain DSM 101675 / C91 / Nm57)</name>
    <dbReference type="NCBI Taxonomy" id="335283"/>
    <lineage>
        <taxon>Bacteria</taxon>
        <taxon>Pseudomonadati</taxon>
        <taxon>Pseudomonadota</taxon>
        <taxon>Betaproteobacteria</taxon>
        <taxon>Nitrosomonadales</taxon>
        <taxon>Nitrosomonadaceae</taxon>
        <taxon>Nitrosomonas</taxon>
    </lineage>
</organism>
<proteinExistence type="inferred from homology"/>
<reference key="1">
    <citation type="journal article" date="2007" name="Environ. Microbiol.">
        <title>Whole-genome analysis of the ammonia-oxidizing bacterium, Nitrosomonas eutropha C91: implications for niche adaptation.</title>
        <authorList>
            <person name="Stein L.Y."/>
            <person name="Arp D.J."/>
            <person name="Berube P.M."/>
            <person name="Chain P.S."/>
            <person name="Hauser L."/>
            <person name="Jetten M.S."/>
            <person name="Klotz M.G."/>
            <person name="Larimer F.W."/>
            <person name="Norton J.M."/>
            <person name="Op den Camp H.J.M."/>
            <person name="Shin M."/>
            <person name="Wei X."/>
        </authorList>
    </citation>
    <scope>NUCLEOTIDE SEQUENCE [LARGE SCALE GENOMIC DNA]</scope>
    <source>
        <strain>DSM 101675 / C91 / Nm57</strain>
    </source>
</reference>